<proteinExistence type="inferred from homology"/>
<keyword id="KW-0007">Acetylation</keyword>
<keyword id="KW-0067">ATP-binding</keyword>
<keyword id="KW-0131">Cell cycle</keyword>
<keyword id="KW-0963">Cytoplasm</keyword>
<keyword id="KW-0968">Cytoplasmic vesicle</keyword>
<keyword id="KW-0206">Cytoskeleton</keyword>
<keyword id="KW-0227">DNA damage</keyword>
<keyword id="KW-0238">DNA-binding</keyword>
<keyword id="KW-0418">Kinase</keyword>
<keyword id="KW-0547">Nucleotide-binding</keyword>
<keyword id="KW-0539">Nucleus</keyword>
<keyword id="KW-0576">Peroxisome</keyword>
<keyword id="KW-0597">Phosphoprotein</keyword>
<keyword id="KW-1185">Reference proteome</keyword>
<keyword id="KW-0723">Serine/threonine-protein kinase</keyword>
<keyword id="KW-0808">Transferase</keyword>
<keyword id="KW-0043">Tumor suppressor</keyword>
<feature type="initiator methionine" description="Removed" evidence="2">
    <location>
        <position position="1"/>
    </location>
</feature>
<feature type="chain" id="PRO_0000088842" description="Serine-protein kinase ATM">
    <location>
        <begin position="2"/>
        <end position="3057"/>
    </location>
</feature>
<feature type="domain" description="FAT" evidence="5">
    <location>
        <begin position="1941"/>
        <end position="2567"/>
    </location>
</feature>
<feature type="domain" description="PI3K/PI4K catalytic" evidence="4">
    <location>
        <begin position="2687"/>
        <end position="2999"/>
    </location>
</feature>
<feature type="domain" description="FATC" evidence="5 6">
    <location>
        <begin position="3025"/>
        <end position="3057"/>
    </location>
</feature>
<feature type="region of interest" description="Interaction with ABL1" evidence="1">
    <location>
        <begin position="1374"/>
        <end position="1383"/>
    </location>
</feature>
<feature type="region of interest" description="Disordered" evidence="7">
    <location>
        <begin position="1970"/>
        <end position="1995"/>
    </location>
</feature>
<feature type="region of interest" description="Disordered" evidence="7">
    <location>
        <begin position="2578"/>
        <end position="2598"/>
    </location>
</feature>
<feature type="region of interest" description="G-loop" evidence="4">
    <location>
        <begin position="2693"/>
        <end position="2699"/>
    </location>
</feature>
<feature type="region of interest" description="Catalytic loop" evidence="4">
    <location>
        <begin position="2868"/>
        <end position="2876"/>
    </location>
</feature>
<feature type="region of interest" description="Activation loop" evidence="4">
    <location>
        <begin position="2888"/>
        <end position="2912"/>
    </location>
</feature>
<feature type="region of interest" description="Disordered" evidence="7">
    <location>
        <begin position="2977"/>
        <end position="2998"/>
    </location>
</feature>
<feature type="short sequence motif" description="Microbody targeting signal; atypical" evidence="2">
    <location>
        <begin position="3047"/>
        <end position="3049"/>
    </location>
</feature>
<feature type="compositionally biased region" description="Polar residues" evidence="7">
    <location>
        <begin position="1980"/>
        <end position="1991"/>
    </location>
</feature>
<feature type="compositionally biased region" description="Polar residues" evidence="7">
    <location>
        <begin position="2582"/>
        <end position="2592"/>
    </location>
</feature>
<feature type="compositionally biased region" description="Basic and acidic residues" evidence="7">
    <location>
        <begin position="2977"/>
        <end position="2997"/>
    </location>
</feature>
<feature type="modified residue" description="N-acetylserine" evidence="2">
    <location>
        <position position="2"/>
    </location>
</feature>
<feature type="modified residue" description="Phosphoserine" evidence="2">
    <location>
        <position position="367"/>
    </location>
</feature>
<feature type="modified residue" description="Phosphoserine" evidence="2">
    <location>
        <position position="1894"/>
    </location>
</feature>
<feature type="modified residue" description="Phosphoserine; by autocatalysis" evidence="2">
    <location>
        <position position="1982"/>
    </location>
</feature>
<feature type="modified residue" description="Phosphoserine" evidence="2">
    <location>
        <position position="1984"/>
    </location>
</feature>
<feature type="modified residue" description="Phosphoserine" evidence="2">
    <location>
        <position position="2997"/>
    </location>
</feature>
<feature type="modified residue" description="N6-acetyllysine" evidence="2">
    <location>
        <position position="3017"/>
    </location>
</feature>
<organism>
    <name type="scientific">Sus scrofa</name>
    <name type="common">Pig</name>
    <dbReference type="NCBI Taxonomy" id="9823"/>
    <lineage>
        <taxon>Eukaryota</taxon>
        <taxon>Metazoa</taxon>
        <taxon>Chordata</taxon>
        <taxon>Craniata</taxon>
        <taxon>Vertebrata</taxon>
        <taxon>Euteleostomi</taxon>
        <taxon>Mammalia</taxon>
        <taxon>Eutheria</taxon>
        <taxon>Laurasiatheria</taxon>
        <taxon>Artiodactyla</taxon>
        <taxon>Suina</taxon>
        <taxon>Suidae</taxon>
        <taxon>Sus</taxon>
    </lineage>
</organism>
<protein>
    <recommendedName>
        <fullName>Serine-protein kinase ATM</fullName>
        <ecNumber evidence="2">2.7.11.1</ecNumber>
    </recommendedName>
    <alternativeName>
        <fullName>Ataxia telangiectasia mutated homolog</fullName>
        <shortName>A-T mutated homolog</shortName>
    </alternativeName>
</protein>
<reference key="1">
    <citation type="submission" date="2006-05" db="EMBL/GenBank/DDBJ databases">
        <title>Genomic organization and comparative analysis of the porcine ataxia-telangiectasia mutated (ATM) gene.</title>
        <authorList>
            <person name="Fritz K.L."/>
            <person name="Rogatcheva M.B."/>
            <person name="Counter C.M."/>
            <person name="Schook L.B."/>
            <person name="Beever J.E."/>
        </authorList>
    </citation>
    <scope>NUCLEOTIDE SEQUENCE [GENOMIC DNA]</scope>
</reference>
<evidence type="ECO:0000250" key="1"/>
<evidence type="ECO:0000250" key="2">
    <source>
        <dbReference type="UniProtKB" id="Q13315"/>
    </source>
</evidence>
<evidence type="ECO:0000250" key="3">
    <source>
        <dbReference type="UniProtKB" id="Q62388"/>
    </source>
</evidence>
<evidence type="ECO:0000255" key="4">
    <source>
        <dbReference type="PROSITE-ProRule" id="PRU00269"/>
    </source>
</evidence>
<evidence type="ECO:0000255" key="5">
    <source>
        <dbReference type="PROSITE-ProRule" id="PRU00534"/>
    </source>
</evidence>
<evidence type="ECO:0000255" key="6">
    <source>
        <dbReference type="PROSITE-ProRule" id="PRU00535"/>
    </source>
</evidence>
<evidence type="ECO:0000256" key="7">
    <source>
        <dbReference type="SAM" id="MobiDB-lite"/>
    </source>
</evidence>
<evidence type="ECO:0000305" key="8"/>
<sequence>MSLALNDLLICCRQLEHDRATERRKAVENFRHLIQDPETVQHLDQHSDSKQGKYLNWDAAFRFLQKYIQKETECLRTAKQNVSASTQATRQKKMQEISSLVKYFIKCANKRAPRLKCQELLNYIMDTVRDSSNNPIYGADYSNILLKDILSVRKYWCEISQQQWRELFLIYFTLYLKPSQDINRLLVARIIQAVTKGCCSQTDGLNSEFLDFFTKAIQNARQEKSSPGLNHILAAYVIFLKTLAANFRIRVCELGDKILPTLLYIWTQHRLNDSLKEVIVELFQLQVYMHHPKGAKTQEKGAYESAKWKSILYNLYDLLVNEISRIGSRGKYSSGSRNIAVKENLIELMADICHQVFNEDTRSLEISQSYTTTQREFSDYNAPCKKRKIELGWGVIKDHLQKSQNDFDVVPWLQIATQLISKYPASLPNCELSPLLMILYQLLPQQRRGERTPYVLRCLMEVALCQGKKPNLESSHKSDLLKIWIKIWSITFRGISSEQIQAENFGLLGAIIQGSLVEVDREFWKLFTGSACKPSCPTVCCLTLALKTCVVPETVETGMENICDGNRKFSLKESIMKWLLFCQLEDDFEDRIELPPILHSNFPHLALEKILVSLIMKNCKAAMNFFQSVPECEQHQKDTEEPSLLEVEELFLQTTFDKMDFLTVVQECTIEKHQSSVGFSFHQNLKESLDRYLLGLSEQLLNNYLPETSDSETLVRCSSLLVGVLGCYCYVGVIAEEEAYTSELFQKAKSLMQCAGESITLFKSKTNEESRIISLRNMMHLCTNCLYKCAKRSPNKIASGFFLRLLTSKLMHDIADVCRSLAFIIKKPFDCREVESMEDDTDKNLMEMNDQSSMSLFNDNPASSVIDANESGESQITMGAMNPLAEEHLSKQDLLVLDMLRFLCMCITIAQSNTMSFRAADIRRKLLMLIDSDRLDPTKSLHLHMYLVLLKELPGEEYPLPMEDVVELLKPLSSVCSLYRRDQDVCKTILNHVLHIVPNLCRENVDAESTRDAQGQFLTVIGAFWHLTKEGKCTFSVRLALVKCLKTLLEADPYSRWAILNVMEKDFPVNEVFPQFLADNHHQVCMLAAGLINRLFQHMKQGDSSTIMRALPLKLQQTAFENAYLKAQERIRQVKSQGGENRELLDEICNRKAVLLTMIAVVLCCSPVCEKQALFALCKSVKENGLEPHLIKKVLEKVSETFGYRHLEDFMASHLDYLVLEWLHLQDAEYSLSSFPFILLNYTNIEDFYRSCYKVLIPHLVMRCHFDEVKSIANQIQGDWKSLLTDCFPKILVNILPYFAYEDTGDRGMAQQRETASKVYDMLKDENLLGKQIDQLFINNLPEIVVELLMTLHEPATSDASQSTDPCDFSGDLDPRPNPPHFPSHVIKATFAYISNCHKTKLKSILEVLSKSPDSYQKILLAICEQAAETNNVYKKHRILKIYHLFVSLLLKDMKSGLGGAWAFVLRDVIYTLIHYINKRPSRFMDVSLRSFSLCCDLLSRVCHTAVTYSKDALESHLHVIVGTLIPLVDGQMEVQKQVLDLLKYLVIDNKDNENLYVMIKLLDPFPDNAVFKDLRITQQEIKYSKGPFSLLEEINHFLSVSVYDALPLTRLEGLKDLRRQLAQHKDQMMDLMRASQDNPQDGIVVKLVVSLLQLSKMAVNHTGEREVLEAVGRCLGEVGPIDFSTIAIQHSKDMPYTKALELFEDKEHHWTLMMLTYLNSTLVEDCVKVRSAAVTCLKSILATKTGHGFWEIFKTTADPMLTYLLPFRTSRKKFLEVPRLNKESPLEGLDDISLWIPQSENHDIWIKTLTCALLDSGGINSEVLQLLKPMCEVKTDFCQTVLPYLIHDILLQDTNESWRSLLSTHIQGFFTNCFRHSSQTSRSTTPANMDSESEHVFRCHLDKKSQRTMLAVVDYMRRQKRSSSGTVFDDAFWLELNYLEVAKVAQSCAAHFTALLYAEIYADKKNMDDQEKRSPTFEEGSQSTTISSLSEKSKEETGISLQDLLLEIYRSIGEPDSLYGCGGGKMLQPLTRLRTYEHEAMWGKALVTYDLETAISSSTRQAGIIQALQNLGLCHILSVYLKGLDHENKEQCAELQELHYQVAWRNMQWDSCVSVNKGMEGTSYHESLYNALQSLRDREFSTFYESLKYARVKEVEELCKGSLESVYSLYPTLSRLQAIGELENIGELFSRSVTDRQPSEVYNKWWKHSQLLKDSDFSFQEPIMALRTVILEILMEKEMENSQRECLKDILTKHLVELSLLARTFQNTQLPERAIFQIKQYNSANCGVSEWQLEEAQVFWAKKEQSLALSILKQMIKKLDASCTENDPRLKLIHIECLRVCGTWLAETCLENPAVIMQTYLEKAVELAGNYDGESNDELRNGKMKAFLSLARFSDTQYQRIENYMKSSEFENKQALLKRAKEEVGLLREHKIQTNRYTIKVQRELELDEGALRALKKDRKRFLCKAVENYINCLLSGEGHDMWIFRLCSLWLENSGVSEVNGMMKRDGMKIPSYKFLPLMYQLAARMGTKMMGGLGFHDVLNSLISRISVDHPHHTLFIILALANANKDEFLTKPEAARSSRITKNTPKESSQLDEDRTEAANKVICTLRNRRRQMVRSVEALCDAYIILANLDATQWRTQRKGIRIPADQPITKLKNLEDVVVPTMEIKVDPTGEYGNMVTIQSFKPEFRLAGGLNLPKIIDCVGSDGKERRQLVKGRDDLRQDAVMQQVFQMCNTLLQRNTETRKRKLTICTYKVVPLSQRSGVLEWCTGTVPIGEYLVNNDTGAHKRYRPKDFSPVQCQKKMMEAQNKSFEEKYEIFMNICQNFQPVFRYFCMEKFLDPAVWFERRLAYTQSVATSSIVGYILGLGDRHVQNILINEQSAELVHIDLGVAFEQGKILPTPETVPFRLTRDIVDGMGITGVEGVFRRCCEKTMEVMRNSQETLLTIVEVLLYDPLFDWTMNPLKALYLQQRPEDESELHSTPRADDQECKRNLSDTDQSFNKVAERVLMRLQEKLKGVEEGTVLSVGGQVNFLIQQAMDPKNLSKLFSGWKAWV</sequence>
<dbReference type="EC" id="2.7.11.1" evidence="2"/>
<dbReference type="EMBL" id="AY587061">
    <property type="protein sequence ID" value="AAT01608.2"/>
    <property type="molecule type" value="Genomic_DNA"/>
</dbReference>
<dbReference type="RefSeq" id="NP_001116552.1">
    <property type="nucleotide sequence ID" value="NM_001123080.1"/>
</dbReference>
<dbReference type="SMR" id="Q6PQD5"/>
<dbReference type="FunCoup" id="Q6PQD5">
    <property type="interactions" value="1792"/>
</dbReference>
<dbReference type="STRING" id="9823.ENSSSCP00000015931"/>
<dbReference type="GlyGen" id="Q6PQD5">
    <property type="glycosylation" value="1 site"/>
</dbReference>
<dbReference type="PaxDb" id="9823-ENSSSCP00000019250"/>
<dbReference type="PeptideAtlas" id="Q6PQD5"/>
<dbReference type="GeneID" id="100101922"/>
<dbReference type="KEGG" id="ssc:100101922"/>
<dbReference type="CTD" id="472"/>
<dbReference type="eggNOG" id="KOG0892">
    <property type="taxonomic scope" value="Eukaryota"/>
</dbReference>
<dbReference type="InParanoid" id="Q6PQD5"/>
<dbReference type="OrthoDB" id="381190at2759"/>
<dbReference type="Proteomes" id="UP000008227">
    <property type="component" value="Unplaced"/>
</dbReference>
<dbReference type="Proteomes" id="UP000314985">
    <property type="component" value="Unplaced"/>
</dbReference>
<dbReference type="Proteomes" id="UP000694570">
    <property type="component" value="Unplaced"/>
</dbReference>
<dbReference type="Proteomes" id="UP000694571">
    <property type="component" value="Unplaced"/>
</dbReference>
<dbReference type="Proteomes" id="UP000694720">
    <property type="component" value="Unplaced"/>
</dbReference>
<dbReference type="Proteomes" id="UP000694722">
    <property type="component" value="Unplaced"/>
</dbReference>
<dbReference type="Proteomes" id="UP000694723">
    <property type="component" value="Unplaced"/>
</dbReference>
<dbReference type="Proteomes" id="UP000694724">
    <property type="component" value="Unplaced"/>
</dbReference>
<dbReference type="Proteomes" id="UP000694725">
    <property type="component" value="Unplaced"/>
</dbReference>
<dbReference type="Proteomes" id="UP000694726">
    <property type="component" value="Unplaced"/>
</dbReference>
<dbReference type="Proteomes" id="UP000694727">
    <property type="component" value="Unplaced"/>
</dbReference>
<dbReference type="Proteomes" id="UP000694728">
    <property type="component" value="Unplaced"/>
</dbReference>
<dbReference type="GO" id="GO:0005813">
    <property type="term" value="C:centrosome"/>
    <property type="evidence" value="ECO:0000250"/>
    <property type="project" value="UniProtKB"/>
</dbReference>
<dbReference type="GO" id="GO:0005694">
    <property type="term" value="C:chromosome"/>
    <property type="evidence" value="ECO:0000318"/>
    <property type="project" value="GO_Central"/>
</dbReference>
<dbReference type="GO" id="GO:0005737">
    <property type="term" value="C:cytoplasm"/>
    <property type="evidence" value="ECO:0000250"/>
    <property type="project" value="UniProtKB"/>
</dbReference>
<dbReference type="GO" id="GO:0031410">
    <property type="term" value="C:cytoplasmic vesicle"/>
    <property type="evidence" value="ECO:0007669"/>
    <property type="project" value="UniProtKB-KW"/>
</dbReference>
<dbReference type="GO" id="GO:0005634">
    <property type="term" value="C:nucleus"/>
    <property type="evidence" value="ECO:0000250"/>
    <property type="project" value="UniProtKB"/>
</dbReference>
<dbReference type="GO" id="GO:0005782">
    <property type="term" value="C:peroxisomal matrix"/>
    <property type="evidence" value="ECO:0000250"/>
    <property type="project" value="UniProtKB"/>
</dbReference>
<dbReference type="GO" id="GO:0005840">
    <property type="term" value="C:ribosome"/>
    <property type="evidence" value="ECO:0007669"/>
    <property type="project" value="InterPro"/>
</dbReference>
<dbReference type="GO" id="GO:0035861">
    <property type="term" value="C:site of double-strand break"/>
    <property type="evidence" value="ECO:0000250"/>
    <property type="project" value="UniProtKB"/>
</dbReference>
<dbReference type="GO" id="GO:0016303">
    <property type="term" value="F:1-phosphatidylinositol-3-kinase activity"/>
    <property type="evidence" value="ECO:0000250"/>
    <property type="project" value="UniProtKB"/>
</dbReference>
<dbReference type="GO" id="GO:0005524">
    <property type="term" value="F:ATP binding"/>
    <property type="evidence" value="ECO:0007669"/>
    <property type="project" value="UniProtKB-KW"/>
</dbReference>
<dbReference type="GO" id="GO:0003677">
    <property type="term" value="F:DNA binding"/>
    <property type="evidence" value="ECO:0007669"/>
    <property type="project" value="UniProtKB-KW"/>
</dbReference>
<dbReference type="GO" id="GO:0035979">
    <property type="term" value="F:histone H2AXS139 kinase activity"/>
    <property type="evidence" value="ECO:0000250"/>
    <property type="project" value="UniProtKB"/>
</dbReference>
<dbReference type="GO" id="GO:0106310">
    <property type="term" value="F:protein serine kinase activity"/>
    <property type="evidence" value="ECO:0007669"/>
    <property type="project" value="RHEA"/>
</dbReference>
<dbReference type="GO" id="GO:0004674">
    <property type="term" value="F:protein serine/threonine kinase activity"/>
    <property type="evidence" value="ECO:0000250"/>
    <property type="project" value="UniProtKB"/>
</dbReference>
<dbReference type="GO" id="GO:0003735">
    <property type="term" value="F:structural constituent of ribosome"/>
    <property type="evidence" value="ECO:0007669"/>
    <property type="project" value="InterPro"/>
</dbReference>
<dbReference type="GO" id="GO:0000077">
    <property type="term" value="P:DNA damage checkpoint signaling"/>
    <property type="evidence" value="ECO:0000250"/>
    <property type="project" value="UniProtKB"/>
</dbReference>
<dbReference type="GO" id="GO:0006302">
    <property type="term" value="P:double-strand break repair"/>
    <property type="evidence" value="ECO:0000250"/>
    <property type="project" value="UniProtKB"/>
</dbReference>
<dbReference type="GO" id="GO:0071044">
    <property type="term" value="P:histone mRNA catabolic process"/>
    <property type="evidence" value="ECO:0000250"/>
    <property type="project" value="UniProtKB"/>
</dbReference>
<dbReference type="GO" id="GO:0008630">
    <property type="term" value="P:intrinsic apoptotic signaling pathway in response to DNA damage"/>
    <property type="evidence" value="ECO:0000318"/>
    <property type="project" value="GO_Central"/>
</dbReference>
<dbReference type="GO" id="GO:0007094">
    <property type="term" value="P:mitotic spindle assembly checkpoint signaling"/>
    <property type="evidence" value="ECO:0000250"/>
    <property type="project" value="UniProtKB"/>
</dbReference>
<dbReference type="GO" id="GO:1904262">
    <property type="term" value="P:negative regulation of TORC1 signaling"/>
    <property type="evidence" value="ECO:0000318"/>
    <property type="project" value="GO_Central"/>
</dbReference>
<dbReference type="GO" id="GO:0000425">
    <property type="term" value="P:pexophagy"/>
    <property type="evidence" value="ECO:0000250"/>
    <property type="project" value="UniProtKB"/>
</dbReference>
<dbReference type="GO" id="GO:0002331">
    <property type="term" value="P:pre-B cell allelic exclusion"/>
    <property type="evidence" value="ECO:0000250"/>
    <property type="project" value="UniProtKB"/>
</dbReference>
<dbReference type="GO" id="GO:0046777">
    <property type="term" value="P:protein autophosphorylation"/>
    <property type="evidence" value="ECO:0000250"/>
    <property type="project" value="UniProtKB"/>
</dbReference>
<dbReference type="GO" id="GO:0006468">
    <property type="term" value="P:protein phosphorylation"/>
    <property type="evidence" value="ECO:0000250"/>
    <property type="project" value="UniProtKB"/>
</dbReference>
<dbReference type="GO" id="GO:0010212">
    <property type="term" value="P:response to ionizing radiation"/>
    <property type="evidence" value="ECO:0000250"/>
    <property type="project" value="UniProtKB"/>
</dbReference>
<dbReference type="GO" id="GO:0042770">
    <property type="term" value="P:signal transduction in response to DNA damage"/>
    <property type="evidence" value="ECO:0000250"/>
    <property type="project" value="UniProtKB"/>
</dbReference>
<dbReference type="GO" id="GO:0000723">
    <property type="term" value="P:telomere maintenance"/>
    <property type="evidence" value="ECO:0000318"/>
    <property type="project" value="GO_Central"/>
</dbReference>
<dbReference type="GO" id="GO:0006412">
    <property type="term" value="P:translation"/>
    <property type="evidence" value="ECO:0007669"/>
    <property type="project" value="InterPro"/>
</dbReference>
<dbReference type="CDD" id="cd05171">
    <property type="entry name" value="PIKKc_ATM"/>
    <property type="match status" value="1"/>
</dbReference>
<dbReference type="FunFam" id="1.10.1070.11:FF:000011">
    <property type="entry name" value="Serine-protein kinase ATM"/>
    <property type="match status" value="1"/>
</dbReference>
<dbReference type="FunFam" id="3.30.1010.10:FF:000015">
    <property type="entry name" value="Serine-protein kinase ATM"/>
    <property type="match status" value="1"/>
</dbReference>
<dbReference type="Gene3D" id="1.10.1070.11">
    <property type="entry name" value="Phosphatidylinositol 3-/4-kinase, catalytic domain"/>
    <property type="match status" value="1"/>
</dbReference>
<dbReference type="Gene3D" id="3.30.1010.10">
    <property type="entry name" value="Phosphatidylinositol 3-kinase Catalytic Subunit, Chain A, domain 4"/>
    <property type="match status" value="1"/>
</dbReference>
<dbReference type="InterPro" id="IPR016024">
    <property type="entry name" value="ARM-type_fold"/>
</dbReference>
<dbReference type="InterPro" id="IPR038980">
    <property type="entry name" value="ATM_plant"/>
</dbReference>
<dbReference type="InterPro" id="IPR056802">
    <property type="entry name" value="ATR-like_M-HEAT"/>
</dbReference>
<dbReference type="InterPro" id="IPR003152">
    <property type="entry name" value="FATC_dom"/>
</dbReference>
<dbReference type="InterPro" id="IPR011009">
    <property type="entry name" value="Kinase-like_dom_sf"/>
</dbReference>
<dbReference type="InterPro" id="IPR000403">
    <property type="entry name" value="PI3/4_kinase_cat_dom"/>
</dbReference>
<dbReference type="InterPro" id="IPR036940">
    <property type="entry name" value="PI3/4_kinase_cat_sf"/>
</dbReference>
<dbReference type="InterPro" id="IPR018936">
    <property type="entry name" value="PI3/4_kinase_CS"/>
</dbReference>
<dbReference type="InterPro" id="IPR003151">
    <property type="entry name" value="PIK-rel_kinase_FAT"/>
</dbReference>
<dbReference type="InterPro" id="IPR014009">
    <property type="entry name" value="PIK_FAT"/>
</dbReference>
<dbReference type="InterPro" id="IPR044107">
    <property type="entry name" value="PIKKc_ATM"/>
</dbReference>
<dbReference type="InterPro" id="IPR018278">
    <property type="entry name" value="Ribosomal_bS21_CS"/>
</dbReference>
<dbReference type="InterPro" id="IPR021668">
    <property type="entry name" value="TAN"/>
</dbReference>
<dbReference type="PANTHER" id="PTHR37079">
    <property type="entry name" value="SERINE/THREONINE-PROTEIN KINASE ATM"/>
    <property type="match status" value="1"/>
</dbReference>
<dbReference type="PANTHER" id="PTHR37079:SF4">
    <property type="entry name" value="SERINE_THREONINE-PROTEIN KINASE ATM"/>
    <property type="match status" value="1"/>
</dbReference>
<dbReference type="Pfam" id="PF02259">
    <property type="entry name" value="FAT"/>
    <property type="match status" value="1"/>
</dbReference>
<dbReference type="Pfam" id="PF02260">
    <property type="entry name" value="FATC"/>
    <property type="match status" value="1"/>
</dbReference>
<dbReference type="Pfam" id="PF25030">
    <property type="entry name" value="M-HEAT_ATR"/>
    <property type="match status" value="1"/>
</dbReference>
<dbReference type="Pfam" id="PF00454">
    <property type="entry name" value="PI3_PI4_kinase"/>
    <property type="match status" value="1"/>
</dbReference>
<dbReference type="Pfam" id="PF11640">
    <property type="entry name" value="TAN"/>
    <property type="match status" value="1"/>
</dbReference>
<dbReference type="SMART" id="SM01343">
    <property type="entry name" value="FATC"/>
    <property type="match status" value="1"/>
</dbReference>
<dbReference type="SMART" id="SM00146">
    <property type="entry name" value="PI3Kc"/>
    <property type="match status" value="1"/>
</dbReference>
<dbReference type="SMART" id="SM01342">
    <property type="entry name" value="TAN"/>
    <property type="match status" value="1"/>
</dbReference>
<dbReference type="SUPFAM" id="SSF48371">
    <property type="entry name" value="ARM repeat"/>
    <property type="match status" value="1"/>
</dbReference>
<dbReference type="SUPFAM" id="SSF56112">
    <property type="entry name" value="Protein kinase-like (PK-like)"/>
    <property type="match status" value="1"/>
</dbReference>
<dbReference type="PROSITE" id="PS51189">
    <property type="entry name" value="FAT"/>
    <property type="match status" value="1"/>
</dbReference>
<dbReference type="PROSITE" id="PS51190">
    <property type="entry name" value="FATC"/>
    <property type="match status" value="1"/>
</dbReference>
<dbReference type="PROSITE" id="PS00915">
    <property type="entry name" value="PI3_4_KINASE_1"/>
    <property type="match status" value="1"/>
</dbReference>
<dbReference type="PROSITE" id="PS00916">
    <property type="entry name" value="PI3_4_KINASE_2"/>
    <property type="match status" value="1"/>
</dbReference>
<dbReference type="PROSITE" id="PS50290">
    <property type="entry name" value="PI3_4_KINASE_3"/>
    <property type="match status" value="1"/>
</dbReference>
<dbReference type="PROSITE" id="PS01181">
    <property type="entry name" value="RIBOSOMAL_S21"/>
    <property type="match status" value="1"/>
</dbReference>
<comment type="function">
    <text evidence="2 3">Serine/threonine protein kinase which activates checkpoint signaling upon double strand breaks (DSBs), apoptosis and genotoxic stresses such as ionizing ultraviolet A light (UVA), thereby acting as a DNA damage sensor. Recognizes the substrate consensus sequence [ST]-Q. Phosphorylates 'Ser-139' of histone variant H2AX at double strand breaks (DSBs), thereby regulating DNA damage response mechanism. Also plays a role in pre-B cell allelic exclusion, a process leading to expression of a single immunoglobulin heavy chain allele to enforce clonality and monospecific recognition by the B-cell antigen receptor (BCR) expressed on individual B-lymphocytes. After the introduction of DNA breaks by the RAG complex on one immunoglobulin allele, acts by mediating a repositioning of the second allele to pericentromeric heterochromatin, preventing accessibility to the RAG complex and recombination of the second allele. Also involved in signal transduction and cell cycle control. May function as a tumor suppressor. Necessary for activation of ABL1 and SAPK. Phosphorylates DYRK2, CHEK2, p53/TP53, FBXW7, FANCD2, NFKBIA, BRCA1, CREBBP/CBP, RBBP8/CTIP, FBXO46, MRE11, nibrin (NBN), RAD50, RAD17, PELI1, TERF1, UFL1, RAD9, UBQLN4 and DCLRE1C. May play a role in vesicle and/or protein transport. Could play a role in T-cell development, gonad and neurological function. Binds DNA ends. Plays a role in replication-dependent histone mRNA degradation. Phosphorylation of DYRK2 in nucleus in response to genotoxic stress prevents its MDM2-mediated ubiquitination and subsequent proteasome degradation. Phosphorylates ATF2 which stimulates its function in DNA damage response (By similarity). Phosphorylates ERCC6 which is essential for its chromatin remodeling activity at DNA double-strand breaks (By similarity). Phosphorylates TTC5/STRAP at 'Ser-203' in the cytoplasm in response to DNA damage, which promotes TTC5/STRAP nuclear localization (By similarity). Also involved in pexophagy by mediating phosphorylation of PEX5: translocated to peroxisomes in response to reactive oxygen species (ROS), and catalyzes phosphorylation of PEX5, promoting PEX5 ubiquitination and induction of pexophagy (By similarity).</text>
</comment>
<comment type="catalytic activity">
    <reaction evidence="2">
        <text>L-seryl-[protein] + ATP = O-phospho-L-seryl-[protein] + ADP + H(+)</text>
        <dbReference type="Rhea" id="RHEA:17989"/>
        <dbReference type="Rhea" id="RHEA-COMP:9863"/>
        <dbReference type="Rhea" id="RHEA-COMP:11604"/>
        <dbReference type="ChEBI" id="CHEBI:15378"/>
        <dbReference type="ChEBI" id="CHEBI:29999"/>
        <dbReference type="ChEBI" id="CHEBI:30616"/>
        <dbReference type="ChEBI" id="CHEBI:83421"/>
        <dbReference type="ChEBI" id="CHEBI:456216"/>
        <dbReference type="EC" id="2.7.11.1"/>
    </reaction>
    <physiologicalReaction direction="left-to-right" evidence="2">
        <dbReference type="Rhea" id="RHEA:17990"/>
    </physiologicalReaction>
</comment>
<comment type="catalytic activity">
    <reaction evidence="2">
        <text>L-threonyl-[protein] + ATP = O-phospho-L-threonyl-[protein] + ADP + H(+)</text>
        <dbReference type="Rhea" id="RHEA:46608"/>
        <dbReference type="Rhea" id="RHEA-COMP:11060"/>
        <dbReference type="Rhea" id="RHEA-COMP:11605"/>
        <dbReference type="ChEBI" id="CHEBI:15378"/>
        <dbReference type="ChEBI" id="CHEBI:30013"/>
        <dbReference type="ChEBI" id="CHEBI:30616"/>
        <dbReference type="ChEBI" id="CHEBI:61977"/>
        <dbReference type="ChEBI" id="CHEBI:456216"/>
        <dbReference type="EC" id="2.7.11.1"/>
    </reaction>
</comment>
<comment type="activity regulation">
    <text evidence="2">Activated by the MRN (MRE11-RAD50-NBS1) complex in response to DNA double strand breaks (DSBs), which recruits ATM to DSBs and promotes its activation. Inhibited by wortmannin.</text>
</comment>
<comment type="subunit">
    <text evidence="2 3">Homodimer. Dimers or tetramers in inactive state. On DNA damage, autophosphorylation dissociates ATM into monomers rendering them catalytically active. Binds p53/TP53, ABL1, BRCA1 and TERF1. Interacts with NBN (via FxF/Y motif). Part of the BRCA1-associated genome surveillance complex (BASC), which contains BRCA1, MSH2, MSH6, MLH1, ATM, BLM, PMS2 and the RAD50-MRE11-NBN protein complex. This association could be a dynamic process changing throughout the cell cycle and within subnuclear domains. Interacts with RAD17; DNA damage promotes the association. Interacts with EEF1E1; the interaction, induced on DNA damage, up-regulates TP53. Interacts with KAT8, NABP2, ATMIN and CEP164 (By similarity). Interacts with AP2B1 and AP3B2; the interaction occurs in cytoplasmic vesicles (By similarity). Interacts with TELO2 and TTI1. Interacts with DDX1. Interacts with BRAT1 (By similarity). Interacts with CYREN (via XLF motif) (By similarity). Interacts (via microbody targeting signal) with PEX5; promoting translocation to peroxisomes in response to reactive oxygen species (ROS) (By similarity).</text>
</comment>
<comment type="subcellular location">
    <subcellularLocation>
        <location evidence="2">Nucleus</location>
    </subcellularLocation>
    <subcellularLocation>
        <location evidence="2">Cytoplasmic vesicle</location>
    </subcellularLocation>
    <subcellularLocation>
        <location evidence="3">Cytoplasm</location>
        <location evidence="3">Cytoskeleton</location>
        <location evidence="3">Microtubule organizing center</location>
        <location evidence="3">Centrosome</location>
    </subcellularLocation>
    <subcellularLocation>
        <location evidence="2">Peroxisome matrix</location>
    </subcellularLocation>
    <text evidence="2">Primarily nuclear. Found also in endocytic vesicles in association with beta-adaptin. Translocated to peroxisomes in response to reactive oxygen species (ROS) by PEX5.</text>
</comment>
<comment type="domain">
    <text evidence="2">The FATC domain is required for interaction with KAT5.</text>
</comment>
<comment type="PTM">
    <text evidence="2">Phosphorylated by NUAK1/ARK5. Autophosphorylation on Ser-367, Ser-1894, Ser-1982 correlates with DNA damage-mediated activation of the kinase. During the late stages of DNA damage response, dephosphorylated following deacetylation by SIRT7, leading to ATM deactivation.</text>
</comment>
<comment type="PTM">
    <text evidence="2">Acetylation, on DNA damage, is required for activation of the kinase activity, dimer-monomer transition, and subsequent autophosphorylation on Ser-1982. Acetylated in vitro by KAT5/TIP60. Deacetylated by SIRT7 during the late stages of DNA damage response, promoting ATM dephosphorylation and subsequent deactivation.</text>
</comment>
<comment type="similarity">
    <text evidence="8">Belongs to the PI3/PI4-kinase family. ATM subfamily.</text>
</comment>
<gene>
    <name type="primary">ATM</name>
</gene>
<name>ATM_PIG</name>
<accession>Q6PQD5</accession>